<sequence>MKALLDLFKQVSQDEQFDAIKIGIASPEKIRSWSFGEVRKPETINYRTFKPERDGLFCAKIFGPIKDYECLCGKYKRLKHRGVICEKCGVEVTVAKVRRERMGHIELASPVAHIWFLKSLPSRLGMVLDMTLRDIERVLYFEAWCVIEPGMTPLKRGQIMSDDDFLAKTEEYGDDFRALMGAEAVRELLRTIDIDREVETLRGELKATSSEAKIKKISKRLKVLEGFQKSGIKAEWMVMEVLPVLPPDLRPLVPLDGGRFATSDLNDLYRRVINRNNRLKRLLELKAPEIILRNEKRMLQEAVDSLLDNGRRGKAMTGANKRQLKSLADMIKGKSGRFRQNLLGKRVDYSGRSVIVVGPQLKLHQCGLPKLMALELFKPFIFNRLEMMGLATTIKAAKKLVESQEPVVWDILEEVIREHPVMLNRAPTLHRLGIQAFEPVLIEGKAIQLHPLVCAAFNADFDGDQMAVHVPLSLEAQLEARTLMLASNNVLFPANGEPSIVPSQDIVLGLYYTTRERINGKGEGIFFADVSEVQRAYDNGEVELQTRITVRLTEYERDEQGEWQPVKHRHETTVGRALLSEILPKGLPFTVLNKALKKKEISRLINQSFRRCGLRDTVIFADKLMQSGFRLATRGGISIAMEDMLIPKAKEGILAEASREVKEIDKQYSSGLVTSQERYNNVVDIWGKAGDKVGKAMMEQLATEPVVNRHGEEVRQESFNSIYMMADSGARGSAAQIRQLAGMRGLMAKPDGSIIETPITANFREGLNVLQYFISTHGARKGLADTALKTANSGYLTRRLVDVTQDLVITEDDCGTSHGYAMKALVEGGEVIEPLRDRILGRVAAIDVVNPDTQETAIAAGTLLDEDLVDLIDRLGVDEVKVRTPLTCETRHGLCAHCYGRDLGRGSHVNVGEAVGVIAAQSIGEPGTQLTMRTFHIGGAASRSALASAVETKSNGTVGFASTMRYVTNAKGERVAISRSGELAIFDDNGRERERHKIPYGATVLVGDGEAVKAGTRLASWDPLTRPIVSEYSGAVRFENIEEGVTVAKQVDEVTGLSTLVVITPKTRGGKIVMRPQIKLVNENGEDVKIAGTDHSVNISFPVGALITVRDGQQVAVGEVLARIPQESQKTRDITGGLPRVAELFEARSPKDAGMLAEVTGTVSFGKDTKGKQRLVITDLEGVSHEFLILKEKQVLVHDGQVVNKGEMIVDGPADPHDILRLQGIEKLATYIVDEVQDVYRLQGVKINDKHIEVIVRQMLRRVNIVDPGDTEFIPGEQVERSELLNENDRVVAEDKRPASYDNVLLGITKASLSTDSFISAASFQETTRVLTEAAIMGKRDDLRGLKENVIVGRLIPAGTGLAYHIARKDKEALEAAEREAARQLANPFEDAPVTVGGEPEAPAADTPSDDSAE</sequence>
<feature type="chain" id="PRO_0000067715" description="DNA-directed RNA polymerase subunit beta'">
    <location>
        <begin position="1"/>
        <end position="1414"/>
    </location>
</feature>
<feature type="region of interest" description="Disordered" evidence="2">
    <location>
        <begin position="1378"/>
        <end position="1414"/>
    </location>
</feature>
<feature type="binding site" evidence="1">
    <location>
        <position position="70"/>
    </location>
    <ligand>
        <name>Zn(2+)</name>
        <dbReference type="ChEBI" id="CHEBI:29105"/>
        <label>1</label>
    </ligand>
</feature>
<feature type="binding site" evidence="1">
    <location>
        <position position="72"/>
    </location>
    <ligand>
        <name>Zn(2+)</name>
        <dbReference type="ChEBI" id="CHEBI:29105"/>
        <label>1</label>
    </ligand>
</feature>
<feature type="binding site" evidence="1">
    <location>
        <position position="85"/>
    </location>
    <ligand>
        <name>Zn(2+)</name>
        <dbReference type="ChEBI" id="CHEBI:29105"/>
        <label>1</label>
    </ligand>
</feature>
<feature type="binding site" evidence="1">
    <location>
        <position position="88"/>
    </location>
    <ligand>
        <name>Zn(2+)</name>
        <dbReference type="ChEBI" id="CHEBI:29105"/>
        <label>1</label>
    </ligand>
</feature>
<feature type="binding site" evidence="1">
    <location>
        <position position="460"/>
    </location>
    <ligand>
        <name>Mg(2+)</name>
        <dbReference type="ChEBI" id="CHEBI:18420"/>
    </ligand>
</feature>
<feature type="binding site" evidence="1">
    <location>
        <position position="462"/>
    </location>
    <ligand>
        <name>Mg(2+)</name>
        <dbReference type="ChEBI" id="CHEBI:18420"/>
    </ligand>
</feature>
<feature type="binding site" evidence="1">
    <location>
        <position position="464"/>
    </location>
    <ligand>
        <name>Mg(2+)</name>
        <dbReference type="ChEBI" id="CHEBI:18420"/>
    </ligand>
</feature>
<feature type="binding site" evidence="1">
    <location>
        <position position="814"/>
    </location>
    <ligand>
        <name>Zn(2+)</name>
        <dbReference type="ChEBI" id="CHEBI:29105"/>
        <label>2</label>
    </ligand>
</feature>
<feature type="binding site" evidence="1">
    <location>
        <position position="888"/>
    </location>
    <ligand>
        <name>Zn(2+)</name>
        <dbReference type="ChEBI" id="CHEBI:29105"/>
        <label>2</label>
    </ligand>
</feature>
<feature type="binding site" evidence="1">
    <location>
        <position position="895"/>
    </location>
    <ligand>
        <name>Zn(2+)</name>
        <dbReference type="ChEBI" id="CHEBI:29105"/>
        <label>2</label>
    </ligand>
</feature>
<feature type="binding site" evidence="1">
    <location>
        <position position="898"/>
    </location>
    <ligand>
        <name>Zn(2+)</name>
        <dbReference type="ChEBI" id="CHEBI:29105"/>
        <label>2</label>
    </ligand>
</feature>
<proteinExistence type="inferred from homology"/>
<gene>
    <name evidence="1" type="primary">rpoC</name>
    <name type="synonym">tabB</name>
    <name type="ordered locus">BP0016</name>
</gene>
<name>RPOC_BORPE</name>
<protein>
    <recommendedName>
        <fullName evidence="1">DNA-directed RNA polymerase subunit beta'</fullName>
        <shortName evidence="1">RNAP subunit beta'</shortName>
        <ecNumber evidence="1">2.7.7.6</ecNumber>
    </recommendedName>
    <alternativeName>
        <fullName evidence="1">RNA polymerase subunit beta'</fullName>
    </alternativeName>
    <alternativeName>
        <fullName evidence="1">Transcriptase subunit beta'</fullName>
    </alternativeName>
</protein>
<keyword id="KW-0240">DNA-directed RNA polymerase</keyword>
<keyword id="KW-0460">Magnesium</keyword>
<keyword id="KW-0479">Metal-binding</keyword>
<keyword id="KW-0548">Nucleotidyltransferase</keyword>
<keyword id="KW-1185">Reference proteome</keyword>
<keyword id="KW-0804">Transcription</keyword>
<keyword id="KW-0808">Transferase</keyword>
<keyword id="KW-0862">Zinc</keyword>
<dbReference type="EC" id="2.7.7.6" evidence="1"/>
<dbReference type="EMBL" id="BX640411">
    <property type="protein sequence ID" value="CAE40395.1"/>
    <property type="molecule type" value="Genomic_DNA"/>
</dbReference>
<dbReference type="RefSeq" id="NP_878933.1">
    <property type="nucleotide sequence ID" value="NC_002929.2"/>
</dbReference>
<dbReference type="RefSeq" id="WP_003818292.1">
    <property type="nucleotide sequence ID" value="NZ_CP039022.1"/>
</dbReference>
<dbReference type="SMR" id="Q7W0R8"/>
<dbReference type="STRING" id="257313.BP0016"/>
<dbReference type="PaxDb" id="257313-BP0016"/>
<dbReference type="GeneID" id="93206244"/>
<dbReference type="KEGG" id="bpe:BP0016"/>
<dbReference type="PATRIC" id="fig|257313.5.peg.16"/>
<dbReference type="eggNOG" id="COG0086">
    <property type="taxonomic scope" value="Bacteria"/>
</dbReference>
<dbReference type="HOGENOM" id="CLU_000524_3_1_4"/>
<dbReference type="Proteomes" id="UP000002676">
    <property type="component" value="Chromosome"/>
</dbReference>
<dbReference type="GO" id="GO:0000428">
    <property type="term" value="C:DNA-directed RNA polymerase complex"/>
    <property type="evidence" value="ECO:0007669"/>
    <property type="project" value="UniProtKB-KW"/>
</dbReference>
<dbReference type="GO" id="GO:0003677">
    <property type="term" value="F:DNA binding"/>
    <property type="evidence" value="ECO:0007669"/>
    <property type="project" value="UniProtKB-UniRule"/>
</dbReference>
<dbReference type="GO" id="GO:0003899">
    <property type="term" value="F:DNA-directed RNA polymerase activity"/>
    <property type="evidence" value="ECO:0007669"/>
    <property type="project" value="UniProtKB-UniRule"/>
</dbReference>
<dbReference type="GO" id="GO:0000287">
    <property type="term" value="F:magnesium ion binding"/>
    <property type="evidence" value="ECO:0007669"/>
    <property type="project" value="UniProtKB-UniRule"/>
</dbReference>
<dbReference type="GO" id="GO:0008270">
    <property type="term" value="F:zinc ion binding"/>
    <property type="evidence" value="ECO:0007669"/>
    <property type="project" value="UniProtKB-UniRule"/>
</dbReference>
<dbReference type="GO" id="GO:0006351">
    <property type="term" value="P:DNA-templated transcription"/>
    <property type="evidence" value="ECO:0007669"/>
    <property type="project" value="UniProtKB-UniRule"/>
</dbReference>
<dbReference type="CDD" id="cd02655">
    <property type="entry name" value="RNAP_beta'_C"/>
    <property type="match status" value="1"/>
</dbReference>
<dbReference type="CDD" id="cd01609">
    <property type="entry name" value="RNAP_beta'_N"/>
    <property type="match status" value="1"/>
</dbReference>
<dbReference type="FunFam" id="1.10.132.30:FF:000003">
    <property type="entry name" value="DNA-directed RNA polymerase subunit beta"/>
    <property type="match status" value="1"/>
</dbReference>
<dbReference type="FunFam" id="1.10.150.390:FF:000002">
    <property type="entry name" value="DNA-directed RNA polymerase subunit beta"/>
    <property type="match status" value="1"/>
</dbReference>
<dbReference type="FunFam" id="4.10.860.120:FF:000001">
    <property type="entry name" value="DNA-directed RNA polymerase subunit beta"/>
    <property type="match status" value="1"/>
</dbReference>
<dbReference type="Gene3D" id="1.10.132.30">
    <property type="match status" value="1"/>
</dbReference>
<dbReference type="Gene3D" id="1.10.150.390">
    <property type="match status" value="1"/>
</dbReference>
<dbReference type="Gene3D" id="1.10.1790.20">
    <property type="match status" value="1"/>
</dbReference>
<dbReference type="Gene3D" id="1.10.40.90">
    <property type="match status" value="1"/>
</dbReference>
<dbReference type="Gene3D" id="2.40.40.20">
    <property type="match status" value="1"/>
</dbReference>
<dbReference type="Gene3D" id="2.40.50.100">
    <property type="match status" value="3"/>
</dbReference>
<dbReference type="Gene3D" id="4.10.860.120">
    <property type="entry name" value="RNA polymerase II, clamp domain"/>
    <property type="match status" value="1"/>
</dbReference>
<dbReference type="Gene3D" id="1.10.274.100">
    <property type="entry name" value="RNA polymerase Rpb1, domain 3"/>
    <property type="match status" value="1"/>
</dbReference>
<dbReference type="HAMAP" id="MF_01322">
    <property type="entry name" value="RNApol_bact_RpoC"/>
    <property type="match status" value="1"/>
</dbReference>
<dbReference type="InterPro" id="IPR045867">
    <property type="entry name" value="DNA-dir_RpoC_beta_prime"/>
</dbReference>
<dbReference type="InterPro" id="IPR012754">
    <property type="entry name" value="DNA-dir_RpoC_beta_prime_bact"/>
</dbReference>
<dbReference type="InterPro" id="IPR000722">
    <property type="entry name" value="RNA_pol_asu"/>
</dbReference>
<dbReference type="InterPro" id="IPR006592">
    <property type="entry name" value="RNA_pol_N"/>
</dbReference>
<dbReference type="InterPro" id="IPR007080">
    <property type="entry name" value="RNA_pol_Rpb1_1"/>
</dbReference>
<dbReference type="InterPro" id="IPR007066">
    <property type="entry name" value="RNA_pol_Rpb1_3"/>
</dbReference>
<dbReference type="InterPro" id="IPR042102">
    <property type="entry name" value="RNA_pol_Rpb1_3_sf"/>
</dbReference>
<dbReference type="InterPro" id="IPR007083">
    <property type="entry name" value="RNA_pol_Rpb1_4"/>
</dbReference>
<dbReference type="InterPro" id="IPR007081">
    <property type="entry name" value="RNA_pol_Rpb1_5"/>
</dbReference>
<dbReference type="InterPro" id="IPR044893">
    <property type="entry name" value="RNA_pol_Rpb1_clamp_domain"/>
</dbReference>
<dbReference type="InterPro" id="IPR038120">
    <property type="entry name" value="Rpb1_funnel_sf"/>
</dbReference>
<dbReference type="NCBIfam" id="TIGR02386">
    <property type="entry name" value="rpoC_TIGR"/>
    <property type="match status" value="1"/>
</dbReference>
<dbReference type="PANTHER" id="PTHR19376">
    <property type="entry name" value="DNA-DIRECTED RNA POLYMERASE"/>
    <property type="match status" value="1"/>
</dbReference>
<dbReference type="PANTHER" id="PTHR19376:SF54">
    <property type="entry name" value="DNA-DIRECTED RNA POLYMERASE SUBUNIT BETA"/>
    <property type="match status" value="1"/>
</dbReference>
<dbReference type="Pfam" id="PF04997">
    <property type="entry name" value="RNA_pol_Rpb1_1"/>
    <property type="match status" value="1"/>
</dbReference>
<dbReference type="Pfam" id="PF00623">
    <property type="entry name" value="RNA_pol_Rpb1_2"/>
    <property type="match status" value="2"/>
</dbReference>
<dbReference type="Pfam" id="PF04983">
    <property type="entry name" value="RNA_pol_Rpb1_3"/>
    <property type="match status" value="1"/>
</dbReference>
<dbReference type="Pfam" id="PF05000">
    <property type="entry name" value="RNA_pol_Rpb1_4"/>
    <property type="match status" value="1"/>
</dbReference>
<dbReference type="Pfam" id="PF04998">
    <property type="entry name" value="RNA_pol_Rpb1_5"/>
    <property type="match status" value="1"/>
</dbReference>
<dbReference type="SMART" id="SM00663">
    <property type="entry name" value="RPOLA_N"/>
    <property type="match status" value="1"/>
</dbReference>
<dbReference type="SUPFAM" id="SSF64484">
    <property type="entry name" value="beta and beta-prime subunits of DNA dependent RNA-polymerase"/>
    <property type="match status" value="1"/>
</dbReference>
<comment type="function">
    <text evidence="1">DNA-dependent RNA polymerase catalyzes the transcription of DNA into RNA using the four ribonucleoside triphosphates as substrates.</text>
</comment>
<comment type="catalytic activity">
    <reaction evidence="1">
        <text>RNA(n) + a ribonucleoside 5'-triphosphate = RNA(n+1) + diphosphate</text>
        <dbReference type="Rhea" id="RHEA:21248"/>
        <dbReference type="Rhea" id="RHEA-COMP:14527"/>
        <dbReference type="Rhea" id="RHEA-COMP:17342"/>
        <dbReference type="ChEBI" id="CHEBI:33019"/>
        <dbReference type="ChEBI" id="CHEBI:61557"/>
        <dbReference type="ChEBI" id="CHEBI:140395"/>
        <dbReference type="EC" id="2.7.7.6"/>
    </reaction>
</comment>
<comment type="cofactor">
    <cofactor evidence="1">
        <name>Mg(2+)</name>
        <dbReference type="ChEBI" id="CHEBI:18420"/>
    </cofactor>
    <text evidence="1">Binds 1 Mg(2+) ion per subunit.</text>
</comment>
<comment type="cofactor">
    <cofactor evidence="1">
        <name>Zn(2+)</name>
        <dbReference type="ChEBI" id="CHEBI:29105"/>
    </cofactor>
    <text evidence="1">Binds 2 Zn(2+) ions per subunit.</text>
</comment>
<comment type="subunit">
    <text evidence="1">The RNAP catalytic core consists of 2 alpha, 1 beta, 1 beta' and 1 omega subunit. When a sigma factor is associated with the core the holoenzyme is formed, which can initiate transcription.</text>
</comment>
<comment type="similarity">
    <text evidence="1">Belongs to the RNA polymerase beta' chain family.</text>
</comment>
<accession>Q7W0R8</accession>
<evidence type="ECO:0000255" key="1">
    <source>
        <dbReference type="HAMAP-Rule" id="MF_01322"/>
    </source>
</evidence>
<evidence type="ECO:0000256" key="2">
    <source>
        <dbReference type="SAM" id="MobiDB-lite"/>
    </source>
</evidence>
<organism>
    <name type="scientific">Bordetella pertussis (strain Tohama I / ATCC BAA-589 / NCTC 13251)</name>
    <dbReference type="NCBI Taxonomy" id="257313"/>
    <lineage>
        <taxon>Bacteria</taxon>
        <taxon>Pseudomonadati</taxon>
        <taxon>Pseudomonadota</taxon>
        <taxon>Betaproteobacteria</taxon>
        <taxon>Burkholderiales</taxon>
        <taxon>Alcaligenaceae</taxon>
        <taxon>Bordetella</taxon>
    </lineage>
</organism>
<reference key="1">
    <citation type="journal article" date="2003" name="Nat. Genet.">
        <title>Comparative analysis of the genome sequences of Bordetella pertussis, Bordetella parapertussis and Bordetella bronchiseptica.</title>
        <authorList>
            <person name="Parkhill J."/>
            <person name="Sebaihia M."/>
            <person name="Preston A."/>
            <person name="Murphy L.D."/>
            <person name="Thomson N.R."/>
            <person name="Harris D.E."/>
            <person name="Holden M.T.G."/>
            <person name="Churcher C.M."/>
            <person name="Bentley S.D."/>
            <person name="Mungall K.L."/>
            <person name="Cerdeno-Tarraga A.-M."/>
            <person name="Temple L."/>
            <person name="James K.D."/>
            <person name="Harris B."/>
            <person name="Quail M.A."/>
            <person name="Achtman M."/>
            <person name="Atkin R."/>
            <person name="Baker S."/>
            <person name="Basham D."/>
            <person name="Bason N."/>
            <person name="Cherevach I."/>
            <person name="Chillingworth T."/>
            <person name="Collins M."/>
            <person name="Cronin A."/>
            <person name="Davis P."/>
            <person name="Doggett J."/>
            <person name="Feltwell T."/>
            <person name="Goble A."/>
            <person name="Hamlin N."/>
            <person name="Hauser H."/>
            <person name="Holroyd S."/>
            <person name="Jagels K."/>
            <person name="Leather S."/>
            <person name="Moule S."/>
            <person name="Norberczak H."/>
            <person name="O'Neil S."/>
            <person name="Ormond D."/>
            <person name="Price C."/>
            <person name="Rabbinowitsch E."/>
            <person name="Rutter S."/>
            <person name="Sanders M."/>
            <person name="Saunders D."/>
            <person name="Seeger K."/>
            <person name="Sharp S."/>
            <person name="Simmonds M."/>
            <person name="Skelton J."/>
            <person name="Squares R."/>
            <person name="Squares S."/>
            <person name="Stevens K."/>
            <person name="Unwin L."/>
            <person name="Whitehead S."/>
            <person name="Barrell B.G."/>
            <person name="Maskell D.J."/>
        </authorList>
    </citation>
    <scope>NUCLEOTIDE SEQUENCE [LARGE SCALE GENOMIC DNA]</scope>
    <source>
        <strain>Tohama I / ATCC BAA-589 / NCTC 13251</strain>
    </source>
</reference>